<gene>
    <name type="ORF">pc3</name>
</gene>
<feature type="chain" id="PRO_0000222520" description="Nucleoprotein">
    <location>
        <begin position="1"/>
        <end position="316"/>
    </location>
</feature>
<feature type="binding site" evidence="2">
    <location>
        <position position="43"/>
    </location>
    <ligand>
        <name>RNA</name>
        <dbReference type="ChEBI" id="CHEBI:33697"/>
    </ligand>
</feature>
<feature type="binding site" evidence="2">
    <location>
        <position position="46"/>
    </location>
    <ligand>
        <name>RNA</name>
        <dbReference type="ChEBI" id="CHEBI:33697"/>
    </ligand>
</feature>
<feature type="binding site" evidence="2">
    <location>
        <position position="76"/>
    </location>
    <ligand>
        <name>RNA</name>
        <dbReference type="ChEBI" id="CHEBI:33697"/>
    </ligand>
</feature>
<feature type="binding site" evidence="2">
    <location>
        <position position="122"/>
    </location>
    <ligand>
        <name>RNA</name>
        <dbReference type="ChEBI" id="CHEBI:33697"/>
    </ligand>
</feature>
<feature type="binding site" evidence="2">
    <location>
        <position position="240"/>
    </location>
    <ligand>
        <name>RNA</name>
        <dbReference type="ChEBI" id="CHEBI:33697"/>
    </ligand>
</feature>
<protein>
    <recommendedName>
        <fullName>Nucleoprotein</fullName>
    </recommendedName>
    <alternativeName>
        <fullName>Coat protein</fullName>
        <shortName>CP</shortName>
    </alternativeName>
    <alternativeName>
        <fullName>Nucleocapsid protein</fullName>
        <shortName>Protein N</shortName>
    </alternativeName>
    <alternativeName>
        <fullName>Protein pc3</fullName>
    </alternativeName>
</protein>
<reference key="1">
    <citation type="journal article" date="1991" name="Virology">
        <title>Nucleotide sequence and RNA hybridization analyses reveal an ambisense coding strategy for maize stripe virus RNA3.</title>
        <authorList>
            <person name="Huiet L."/>
            <person name="Klaassen V."/>
            <person name="Tsai J.H."/>
            <person name="Falk B.W."/>
        </authorList>
    </citation>
    <scope>NUCLEOTIDE SEQUENCE [GENOMIC RNA]</scope>
</reference>
<comment type="function">
    <text evidence="1">Encapsidates the genome, protecting it from nucleases. The encapsidated genomic RNA is termed the nucleocapsid (NC), and serves as template for viral transcription and replication (By similarity).</text>
</comment>
<comment type="subcellular location">
    <subcellularLocation>
        <location>Virion</location>
    </subcellularLocation>
    <subcellularLocation>
        <location evidence="1">Host cytoplasm</location>
    </subcellularLocation>
</comment>
<comment type="domain">
    <text evidence="2">The N-terminus is involved in homooligomerization.</text>
</comment>
<comment type="similarity">
    <text evidence="3">Belongs to the tenuiviruses nucleocapsid protein family.</text>
</comment>
<dbReference type="EMBL" id="M57426">
    <property type="protein sequence ID" value="AAA46637.1"/>
    <property type="molecule type" value="Genomic_RNA"/>
</dbReference>
<dbReference type="PIR" id="B39146">
    <property type="entry name" value="VNWRMS"/>
</dbReference>
<dbReference type="SMR" id="P27207"/>
<dbReference type="OrthoDB" id="5674at10239"/>
<dbReference type="Proteomes" id="UP000234995">
    <property type="component" value="Genome"/>
</dbReference>
<dbReference type="GO" id="GO:0019029">
    <property type="term" value="C:helical viral capsid"/>
    <property type="evidence" value="ECO:0007669"/>
    <property type="project" value="UniProtKB-KW"/>
</dbReference>
<dbReference type="GO" id="GO:0030430">
    <property type="term" value="C:host cell cytoplasm"/>
    <property type="evidence" value="ECO:0007669"/>
    <property type="project" value="UniProtKB-SubCell"/>
</dbReference>
<dbReference type="GO" id="GO:0019013">
    <property type="term" value="C:viral nucleocapsid"/>
    <property type="evidence" value="ECO:0007669"/>
    <property type="project" value="UniProtKB-KW"/>
</dbReference>
<dbReference type="GO" id="GO:0003723">
    <property type="term" value="F:RNA binding"/>
    <property type="evidence" value="ECO:0007669"/>
    <property type="project" value="UniProtKB-KW"/>
</dbReference>
<dbReference type="InterPro" id="IPR009522">
    <property type="entry name" value="Capsid_Phlebovir/Tenuivir"/>
</dbReference>
<dbReference type="InterPro" id="IPR008864">
    <property type="entry name" value="Nucleocapsid_Tenuivirus"/>
</dbReference>
<dbReference type="Pfam" id="PF05733">
    <property type="entry name" value="Tenui_N"/>
    <property type="match status" value="1"/>
</dbReference>
<dbReference type="PIRSF" id="PIRSF004108">
    <property type="entry name" value="Tenuivirus_N"/>
    <property type="match status" value="1"/>
</dbReference>
<accession>P27207</accession>
<organism>
    <name type="scientific">Maize stripe virus</name>
    <name type="common">MStV</name>
    <dbReference type="NCBI Taxonomy" id="3052767"/>
    <lineage>
        <taxon>Viruses</taxon>
        <taxon>Riboviria</taxon>
        <taxon>Orthornavirae</taxon>
        <taxon>Negarnaviricota</taxon>
        <taxon>Polyploviricotina</taxon>
        <taxon>Ellioviricetes</taxon>
        <taxon>Bunyavirales</taxon>
        <taxon>Phenuiviridae</taxon>
        <taxon>Tenuivirus</taxon>
    </lineage>
</organism>
<proteinExistence type="inferred from homology"/>
<evidence type="ECO:0000250" key="1"/>
<evidence type="ECO:0000250" key="2">
    <source>
        <dbReference type="UniProtKB" id="P21701"/>
    </source>
</evidence>
<evidence type="ECO:0000305" key="3"/>
<keyword id="KW-0167">Capsid protein</keyword>
<keyword id="KW-1139">Helical capsid protein</keyword>
<keyword id="KW-1035">Host cytoplasm</keyword>
<keyword id="KW-0694">RNA-binding</keyword>
<keyword id="KW-0543">Viral nucleoprotein</keyword>
<keyword id="KW-0946">Virion</keyword>
<organismHost>
    <name type="scientific">Rottboellia</name>
    <dbReference type="NCBI Taxonomy" id="300124"/>
</organismHost>
<organismHost>
    <name type="scientific">Sorghum bicolor</name>
    <name type="common">Sorghum</name>
    <name type="synonym">Sorghum vulgare</name>
    <dbReference type="NCBI Taxonomy" id="4558"/>
</organismHost>
<organismHost>
    <name type="scientific">Zea mays</name>
    <name type="common">Maize</name>
    <dbReference type="NCBI Taxonomy" id="4577"/>
</organismHost>
<sequence length="316" mass="34597">MATNKPANLNDLQKAINDISKDALKYLTDNKASVTTFHDQIGYAGYDAATLIGILKDKGGATLAQDVVKMIVMRYVRGTGFVKDVTKKTKATAGSEEAAALVARYGLVSSVGSNANAITLGRVAQLFPNVSFEVTKQFTGLKMAIDSSDLSMSGTDSLLWDFVPQYITLDSSSAPYCTTKSVAHILFSIHVIHAFLVTKKTMPEAKKKERGLLKDIDIIKYTTGLLVITCQSKNLNEAKKKSGRTKVCEPYCVNEKFKESFLALLASFGKNVVCSYGTQVKQFLAEQCSLMKTIVDNSSKTQDEMKALIIEFFEEE</sequence>
<name>NCAP_MSTV</name>